<dbReference type="EC" id="6.3.4.2" evidence="1"/>
<dbReference type="EMBL" id="AE009949">
    <property type="protein sequence ID" value="AAL98450.1"/>
    <property type="molecule type" value="Genomic_DNA"/>
</dbReference>
<dbReference type="RefSeq" id="WP_002982843.1">
    <property type="nucleotide sequence ID" value="NC_003485.1"/>
</dbReference>
<dbReference type="SMR" id="Q8NZF8"/>
<dbReference type="KEGG" id="spm:spyM18_1959"/>
<dbReference type="HOGENOM" id="CLU_011675_5_0_9"/>
<dbReference type="UniPathway" id="UPA00159">
    <property type="reaction ID" value="UER00277"/>
</dbReference>
<dbReference type="GO" id="GO:0005829">
    <property type="term" value="C:cytosol"/>
    <property type="evidence" value="ECO:0007669"/>
    <property type="project" value="TreeGrafter"/>
</dbReference>
<dbReference type="GO" id="GO:0005524">
    <property type="term" value="F:ATP binding"/>
    <property type="evidence" value="ECO:0007669"/>
    <property type="project" value="UniProtKB-KW"/>
</dbReference>
<dbReference type="GO" id="GO:0003883">
    <property type="term" value="F:CTP synthase activity"/>
    <property type="evidence" value="ECO:0007669"/>
    <property type="project" value="UniProtKB-UniRule"/>
</dbReference>
<dbReference type="GO" id="GO:0004359">
    <property type="term" value="F:glutaminase activity"/>
    <property type="evidence" value="ECO:0007669"/>
    <property type="project" value="RHEA"/>
</dbReference>
<dbReference type="GO" id="GO:0042802">
    <property type="term" value="F:identical protein binding"/>
    <property type="evidence" value="ECO:0007669"/>
    <property type="project" value="TreeGrafter"/>
</dbReference>
<dbReference type="GO" id="GO:0046872">
    <property type="term" value="F:metal ion binding"/>
    <property type="evidence" value="ECO:0007669"/>
    <property type="project" value="UniProtKB-KW"/>
</dbReference>
<dbReference type="GO" id="GO:0044210">
    <property type="term" value="P:'de novo' CTP biosynthetic process"/>
    <property type="evidence" value="ECO:0007669"/>
    <property type="project" value="UniProtKB-UniRule"/>
</dbReference>
<dbReference type="GO" id="GO:0019856">
    <property type="term" value="P:pyrimidine nucleobase biosynthetic process"/>
    <property type="evidence" value="ECO:0007669"/>
    <property type="project" value="TreeGrafter"/>
</dbReference>
<dbReference type="CDD" id="cd03113">
    <property type="entry name" value="CTPS_N"/>
    <property type="match status" value="1"/>
</dbReference>
<dbReference type="CDD" id="cd01746">
    <property type="entry name" value="GATase1_CTP_Synthase"/>
    <property type="match status" value="1"/>
</dbReference>
<dbReference type="FunFam" id="3.40.50.300:FF:000009">
    <property type="entry name" value="CTP synthase"/>
    <property type="match status" value="1"/>
</dbReference>
<dbReference type="FunFam" id="3.40.50.880:FF:000002">
    <property type="entry name" value="CTP synthase"/>
    <property type="match status" value="1"/>
</dbReference>
<dbReference type="Gene3D" id="3.40.50.880">
    <property type="match status" value="1"/>
</dbReference>
<dbReference type="Gene3D" id="3.40.50.300">
    <property type="entry name" value="P-loop containing nucleotide triphosphate hydrolases"/>
    <property type="match status" value="1"/>
</dbReference>
<dbReference type="HAMAP" id="MF_01227">
    <property type="entry name" value="PyrG"/>
    <property type="match status" value="1"/>
</dbReference>
<dbReference type="InterPro" id="IPR029062">
    <property type="entry name" value="Class_I_gatase-like"/>
</dbReference>
<dbReference type="InterPro" id="IPR004468">
    <property type="entry name" value="CTP_synthase"/>
</dbReference>
<dbReference type="InterPro" id="IPR017456">
    <property type="entry name" value="CTP_synthase_N"/>
</dbReference>
<dbReference type="InterPro" id="IPR017926">
    <property type="entry name" value="GATASE"/>
</dbReference>
<dbReference type="InterPro" id="IPR033828">
    <property type="entry name" value="GATase1_CTP_Synthase"/>
</dbReference>
<dbReference type="InterPro" id="IPR027417">
    <property type="entry name" value="P-loop_NTPase"/>
</dbReference>
<dbReference type="NCBIfam" id="NF003792">
    <property type="entry name" value="PRK05380.1"/>
    <property type="match status" value="1"/>
</dbReference>
<dbReference type="NCBIfam" id="TIGR00337">
    <property type="entry name" value="PyrG"/>
    <property type="match status" value="1"/>
</dbReference>
<dbReference type="PANTHER" id="PTHR11550">
    <property type="entry name" value="CTP SYNTHASE"/>
    <property type="match status" value="1"/>
</dbReference>
<dbReference type="PANTHER" id="PTHR11550:SF0">
    <property type="entry name" value="CTP SYNTHASE-RELATED"/>
    <property type="match status" value="1"/>
</dbReference>
<dbReference type="Pfam" id="PF06418">
    <property type="entry name" value="CTP_synth_N"/>
    <property type="match status" value="1"/>
</dbReference>
<dbReference type="Pfam" id="PF00117">
    <property type="entry name" value="GATase"/>
    <property type="match status" value="1"/>
</dbReference>
<dbReference type="SUPFAM" id="SSF52317">
    <property type="entry name" value="Class I glutamine amidotransferase-like"/>
    <property type="match status" value="1"/>
</dbReference>
<dbReference type="SUPFAM" id="SSF52540">
    <property type="entry name" value="P-loop containing nucleoside triphosphate hydrolases"/>
    <property type="match status" value="1"/>
</dbReference>
<dbReference type="PROSITE" id="PS51273">
    <property type="entry name" value="GATASE_TYPE_1"/>
    <property type="match status" value="1"/>
</dbReference>
<protein>
    <recommendedName>
        <fullName evidence="1">CTP synthase</fullName>
        <ecNumber evidence="1">6.3.4.2</ecNumber>
    </recommendedName>
    <alternativeName>
        <fullName evidence="1">Cytidine 5'-triphosphate synthase</fullName>
    </alternativeName>
    <alternativeName>
        <fullName evidence="1">Cytidine triphosphate synthetase</fullName>
        <shortName evidence="1">CTP synthetase</shortName>
        <shortName evidence="1">CTPS</shortName>
    </alternativeName>
    <alternativeName>
        <fullName evidence="1">UTP--ammonia ligase</fullName>
    </alternativeName>
</protein>
<evidence type="ECO:0000255" key="1">
    <source>
        <dbReference type="HAMAP-Rule" id="MF_01227"/>
    </source>
</evidence>
<reference key="1">
    <citation type="journal article" date="2002" name="Proc. Natl. Acad. Sci. U.S.A.">
        <title>Genome sequence and comparative microarray analysis of serotype M18 group A Streptococcus strains associated with acute rheumatic fever outbreaks.</title>
        <authorList>
            <person name="Smoot J.C."/>
            <person name="Barbian K.D."/>
            <person name="Van Gompel J.J."/>
            <person name="Smoot L.M."/>
            <person name="Chaussee M.S."/>
            <person name="Sylva G.L."/>
            <person name="Sturdevant D.E."/>
            <person name="Ricklefs S.M."/>
            <person name="Porcella S.F."/>
            <person name="Parkins L.D."/>
            <person name="Beres S.B."/>
            <person name="Campbell D.S."/>
            <person name="Smith T.M."/>
            <person name="Zhang Q."/>
            <person name="Kapur V."/>
            <person name="Daly J.A."/>
            <person name="Veasy L.G."/>
            <person name="Musser J.M."/>
        </authorList>
    </citation>
    <scope>NUCLEOTIDE SEQUENCE [LARGE SCALE GENOMIC DNA]</scope>
    <source>
        <strain>MGAS8232</strain>
    </source>
</reference>
<proteinExistence type="inferred from homology"/>
<keyword id="KW-0067">ATP-binding</keyword>
<keyword id="KW-0315">Glutamine amidotransferase</keyword>
<keyword id="KW-0436">Ligase</keyword>
<keyword id="KW-0460">Magnesium</keyword>
<keyword id="KW-0479">Metal-binding</keyword>
<keyword id="KW-0547">Nucleotide-binding</keyword>
<keyword id="KW-0665">Pyrimidine biosynthesis</keyword>
<comment type="function">
    <text evidence="1">Catalyzes the ATP-dependent amination of UTP to CTP with either L-glutamine or ammonia as the source of nitrogen. Regulates intracellular CTP levels through interactions with the four ribonucleotide triphosphates.</text>
</comment>
<comment type="catalytic activity">
    <reaction evidence="1">
        <text>UTP + L-glutamine + ATP + H2O = CTP + L-glutamate + ADP + phosphate + 2 H(+)</text>
        <dbReference type="Rhea" id="RHEA:26426"/>
        <dbReference type="ChEBI" id="CHEBI:15377"/>
        <dbReference type="ChEBI" id="CHEBI:15378"/>
        <dbReference type="ChEBI" id="CHEBI:29985"/>
        <dbReference type="ChEBI" id="CHEBI:30616"/>
        <dbReference type="ChEBI" id="CHEBI:37563"/>
        <dbReference type="ChEBI" id="CHEBI:43474"/>
        <dbReference type="ChEBI" id="CHEBI:46398"/>
        <dbReference type="ChEBI" id="CHEBI:58359"/>
        <dbReference type="ChEBI" id="CHEBI:456216"/>
        <dbReference type="EC" id="6.3.4.2"/>
    </reaction>
</comment>
<comment type="catalytic activity">
    <reaction evidence="1">
        <text>L-glutamine + H2O = L-glutamate + NH4(+)</text>
        <dbReference type="Rhea" id="RHEA:15889"/>
        <dbReference type="ChEBI" id="CHEBI:15377"/>
        <dbReference type="ChEBI" id="CHEBI:28938"/>
        <dbReference type="ChEBI" id="CHEBI:29985"/>
        <dbReference type="ChEBI" id="CHEBI:58359"/>
    </reaction>
</comment>
<comment type="catalytic activity">
    <reaction evidence="1">
        <text>UTP + NH4(+) + ATP = CTP + ADP + phosphate + 2 H(+)</text>
        <dbReference type="Rhea" id="RHEA:16597"/>
        <dbReference type="ChEBI" id="CHEBI:15378"/>
        <dbReference type="ChEBI" id="CHEBI:28938"/>
        <dbReference type="ChEBI" id="CHEBI:30616"/>
        <dbReference type="ChEBI" id="CHEBI:37563"/>
        <dbReference type="ChEBI" id="CHEBI:43474"/>
        <dbReference type="ChEBI" id="CHEBI:46398"/>
        <dbReference type="ChEBI" id="CHEBI:456216"/>
    </reaction>
</comment>
<comment type="activity regulation">
    <text evidence="1">Allosterically activated by GTP, when glutamine is the substrate; GTP has no effect on the reaction when ammonia is the substrate. The allosteric effector GTP functions by stabilizing the protein conformation that binds the tetrahedral intermediate(s) formed during glutamine hydrolysis. Inhibited by the product CTP, via allosteric rather than competitive inhibition.</text>
</comment>
<comment type="pathway">
    <text evidence="1">Pyrimidine metabolism; CTP biosynthesis via de novo pathway; CTP from UDP: step 2/2.</text>
</comment>
<comment type="subunit">
    <text evidence="1">Homotetramer.</text>
</comment>
<comment type="miscellaneous">
    <text evidence="1">CTPSs have evolved a hybrid strategy for distinguishing between UTP and CTP. The overlapping regions of the product feedback inhibitory and substrate sites recognize a common feature in both compounds, the triphosphate moiety. To differentiate isosteric substrate and product pyrimidine rings, an additional pocket far from the expected kinase/ligase catalytic site, specifically recognizes the cytosine and ribose portions of the product inhibitor.</text>
</comment>
<comment type="similarity">
    <text evidence="1">Belongs to the CTP synthase family.</text>
</comment>
<feature type="chain" id="PRO_0000138238" description="CTP synthase">
    <location>
        <begin position="1"/>
        <end position="534"/>
    </location>
</feature>
<feature type="domain" description="Glutamine amidotransferase type-1" evidence="1">
    <location>
        <begin position="292"/>
        <end position="534"/>
    </location>
</feature>
<feature type="region of interest" description="Amidoligase domain" evidence="1">
    <location>
        <begin position="1"/>
        <end position="267"/>
    </location>
</feature>
<feature type="active site" description="Nucleophile; for glutamine hydrolysis" evidence="1">
    <location>
        <position position="381"/>
    </location>
</feature>
<feature type="active site" evidence="1">
    <location>
        <position position="508"/>
    </location>
</feature>
<feature type="active site" evidence="1">
    <location>
        <position position="510"/>
    </location>
</feature>
<feature type="binding site" evidence="1">
    <location>
        <position position="13"/>
    </location>
    <ligand>
        <name>CTP</name>
        <dbReference type="ChEBI" id="CHEBI:37563"/>
        <note>allosteric inhibitor</note>
    </ligand>
</feature>
<feature type="binding site" evidence="1">
    <location>
        <position position="13"/>
    </location>
    <ligand>
        <name>UTP</name>
        <dbReference type="ChEBI" id="CHEBI:46398"/>
    </ligand>
</feature>
<feature type="binding site" evidence="1">
    <location>
        <begin position="14"/>
        <end position="19"/>
    </location>
    <ligand>
        <name>ATP</name>
        <dbReference type="ChEBI" id="CHEBI:30616"/>
    </ligand>
</feature>
<feature type="binding site" evidence="1">
    <location>
        <position position="54"/>
    </location>
    <ligand>
        <name>L-glutamine</name>
        <dbReference type="ChEBI" id="CHEBI:58359"/>
    </ligand>
</feature>
<feature type="binding site" evidence="1">
    <location>
        <position position="71"/>
    </location>
    <ligand>
        <name>ATP</name>
        <dbReference type="ChEBI" id="CHEBI:30616"/>
    </ligand>
</feature>
<feature type="binding site" evidence="1">
    <location>
        <position position="71"/>
    </location>
    <ligand>
        <name>Mg(2+)</name>
        <dbReference type="ChEBI" id="CHEBI:18420"/>
    </ligand>
</feature>
<feature type="binding site" evidence="1">
    <location>
        <position position="141"/>
    </location>
    <ligand>
        <name>Mg(2+)</name>
        <dbReference type="ChEBI" id="CHEBI:18420"/>
    </ligand>
</feature>
<feature type="binding site" evidence="1">
    <location>
        <begin position="148"/>
        <end position="150"/>
    </location>
    <ligand>
        <name>CTP</name>
        <dbReference type="ChEBI" id="CHEBI:37563"/>
        <note>allosteric inhibitor</note>
    </ligand>
</feature>
<feature type="binding site" evidence="1">
    <location>
        <begin position="188"/>
        <end position="193"/>
    </location>
    <ligand>
        <name>CTP</name>
        <dbReference type="ChEBI" id="CHEBI:37563"/>
        <note>allosteric inhibitor</note>
    </ligand>
</feature>
<feature type="binding site" evidence="1">
    <location>
        <begin position="188"/>
        <end position="193"/>
    </location>
    <ligand>
        <name>UTP</name>
        <dbReference type="ChEBI" id="CHEBI:46398"/>
    </ligand>
</feature>
<feature type="binding site" evidence="1">
    <location>
        <position position="224"/>
    </location>
    <ligand>
        <name>CTP</name>
        <dbReference type="ChEBI" id="CHEBI:37563"/>
        <note>allosteric inhibitor</note>
    </ligand>
</feature>
<feature type="binding site" evidence="1">
    <location>
        <position position="224"/>
    </location>
    <ligand>
        <name>UTP</name>
        <dbReference type="ChEBI" id="CHEBI:46398"/>
    </ligand>
</feature>
<feature type="binding site" evidence="1">
    <location>
        <begin position="240"/>
        <end position="242"/>
    </location>
    <ligand>
        <name>ATP</name>
        <dbReference type="ChEBI" id="CHEBI:30616"/>
    </ligand>
</feature>
<feature type="binding site" evidence="1">
    <location>
        <position position="354"/>
    </location>
    <ligand>
        <name>L-glutamine</name>
        <dbReference type="ChEBI" id="CHEBI:58359"/>
    </ligand>
</feature>
<feature type="binding site" evidence="1">
    <location>
        <begin position="382"/>
        <end position="385"/>
    </location>
    <ligand>
        <name>L-glutamine</name>
        <dbReference type="ChEBI" id="CHEBI:58359"/>
    </ligand>
</feature>
<feature type="binding site" evidence="1">
    <location>
        <position position="405"/>
    </location>
    <ligand>
        <name>L-glutamine</name>
        <dbReference type="ChEBI" id="CHEBI:58359"/>
    </ligand>
</feature>
<feature type="binding site" evidence="1">
    <location>
        <position position="463"/>
    </location>
    <ligand>
        <name>L-glutamine</name>
        <dbReference type="ChEBI" id="CHEBI:58359"/>
    </ligand>
</feature>
<gene>
    <name evidence="1" type="primary">pyrG</name>
    <name type="ordered locus">spyM18_1959</name>
</gene>
<accession>Q8NZF8</accession>
<sequence>MTKYIFVTGGVVSSIGKGIVAASLGRLLKNRGLKVTIQKFDPYINIDPGTMSPYQHGEVYVTDDGAETDLDLGHYERFIDINLNKYSNVTTGKIYSEVLRKERKGEYLGATVQVIPHITDALKEKIKRAASTTDSDVIITEVGGTVGDIESLPFLEALRQMKADVGSENVMYIHTTLLPYLKAAGEMKTKPTQHSVKELRGLGIQPNMLVIRTEEPVEQGIKNKLAQFCDVNSEAVIESRDVEHLYQIPLNLQAQSMDQIVCDHLKLNAPQADMTEWSAMVDKVMNLRKTTKIALVGKYVELPDAYLSVVEALKHSGYANDTAIDLKWVNANDVTVENAADLLGDADGIIVPGGFGQRGTEGKIQAIRYARENDVPMLGICLGMQLTCVEFARHVLNMEGANSFELEPSTKYPIIDIMRDQIDIEDMGGTLRLGLYPCKLKPGSKAAMAYNNQEVVQRRHRHRYEFNNKFRSEFEAAGFVFSGVSPDNRLVEIVELKEKKFFVAAQYHPELQSRPNRPEELYTAFVTAAIKNSN</sequence>
<organism>
    <name type="scientific">Streptococcus pyogenes serotype M18 (strain MGAS8232)</name>
    <dbReference type="NCBI Taxonomy" id="186103"/>
    <lineage>
        <taxon>Bacteria</taxon>
        <taxon>Bacillati</taxon>
        <taxon>Bacillota</taxon>
        <taxon>Bacilli</taxon>
        <taxon>Lactobacillales</taxon>
        <taxon>Streptococcaceae</taxon>
        <taxon>Streptococcus</taxon>
    </lineage>
</organism>
<name>PYRG_STRP8</name>